<dbReference type="EC" id="1.14.14.154" evidence="2 3"/>
<dbReference type="EMBL" id="DQ078267">
    <property type="protein sequence ID" value="AAY82452.1"/>
    <property type="molecule type" value="mRNA"/>
</dbReference>
<dbReference type="EMBL" id="DQ085625">
    <property type="protein sequence ID" value="AAZ74630.1"/>
    <property type="molecule type" value="mRNA"/>
</dbReference>
<dbReference type="EMBL" id="BC149346">
    <property type="protein sequence ID" value="AAI49347.1"/>
    <property type="molecule type" value="mRNA"/>
</dbReference>
<dbReference type="RefSeq" id="NP_001020490.1">
    <property type="nucleotide sequence ID" value="NM_001025319.2"/>
</dbReference>
<dbReference type="SMR" id="Q4PJW3"/>
<dbReference type="FunCoup" id="Q4PJW3">
    <property type="interactions" value="1779"/>
</dbReference>
<dbReference type="STRING" id="9913.ENSBTAP00000002582"/>
<dbReference type="PaxDb" id="9913-ENSBTAP00000002582"/>
<dbReference type="GeneID" id="505060"/>
<dbReference type="KEGG" id="bta:505060"/>
<dbReference type="CTD" id="1595"/>
<dbReference type="VEuPathDB" id="HostDB:ENSBTAG00000001992"/>
<dbReference type="eggNOG" id="KOG0684">
    <property type="taxonomic scope" value="Eukaryota"/>
</dbReference>
<dbReference type="HOGENOM" id="CLU_001570_15_0_1"/>
<dbReference type="InParanoid" id="Q4PJW3"/>
<dbReference type="OMA" id="HWFPFVG"/>
<dbReference type="OrthoDB" id="1055148at2759"/>
<dbReference type="TreeFam" id="TF105091"/>
<dbReference type="BRENDA" id="1.14.14.154">
    <property type="organism ID" value="908"/>
</dbReference>
<dbReference type="Reactome" id="R-BTA-191273">
    <property type="pathway name" value="Cholesterol biosynthesis"/>
</dbReference>
<dbReference type="Reactome" id="R-BTA-211976">
    <property type="pathway name" value="Endogenous sterols"/>
</dbReference>
<dbReference type="UniPathway" id="UPA00770">
    <property type="reaction ID" value="UER00754"/>
</dbReference>
<dbReference type="Proteomes" id="UP000009136">
    <property type="component" value="Chromosome 4"/>
</dbReference>
<dbReference type="Bgee" id="ENSBTAG00000001992">
    <property type="expression patterns" value="Expressed in diaphragm and 103 other cell types or tissues"/>
</dbReference>
<dbReference type="GO" id="GO:0005789">
    <property type="term" value="C:endoplasmic reticulum membrane"/>
    <property type="evidence" value="ECO:0007669"/>
    <property type="project" value="UniProtKB-SubCell"/>
</dbReference>
<dbReference type="GO" id="GO:0020037">
    <property type="term" value="F:heme binding"/>
    <property type="evidence" value="ECO:0000250"/>
    <property type="project" value="UniProtKB"/>
</dbReference>
<dbReference type="GO" id="GO:0005506">
    <property type="term" value="F:iron ion binding"/>
    <property type="evidence" value="ECO:0007669"/>
    <property type="project" value="InterPro"/>
</dbReference>
<dbReference type="GO" id="GO:0016491">
    <property type="term" value="F:oxidoreductase activity"/>
    <property type="evidence" value="ECO:0000318"/>
    <property type="project" value="GO_Central"/>
</dbReference>
<dbReference type="GO" id="GO:0008398">
    <property type="term" value="F:sterol 14-demethylase activity"/>
    <property type="evidence" value="ECO:0000250"/>
    <property type="project" value="UniProtKB"/>
</dbReference>
<dbReference type="GO" id="GO:0033488">
    <property type="term" value="P:cholesterol biosynthetic process via 24,25-dihydrolanosterol"/>
    <property type="evidence" value="ECO:0000318"/>
    <property type="project" value="GO_Central"/>
</dbReference>
<dbReference type="GO" id="GO:0006694">
    <property type="term" value="P:steroid biosynthetic process"/>
    <property type="evidence" value="ECO:0000250"/>
    <property type="project" value="UniProtKB"/>
</dbReference>
<dbReference type="CDD" id="cd11042">
    <property type="entry name" value="CYP51-like"/>
    <property type="match status" value="1"/>
</dbReference>
<dbReference type="FunFam" id="1.10.630.10:FF:000027">
    <property type="entry name" value="lanosterol 14-alpha demethylase isoform X1"/>
    <property type="match status" value="1"/>
</dbReference>
<dbReference type="Gene3D" id="1.10.630.10">
    <property type="entry name" value="Cytochrome P450"/>
    <property type="match status" value="1"/>
</dbReference>
<dbReference type="InterPro" id="IPR050529">
    <property type="entry name" value="CYP450_sterol_14alpha_dmase"/>
</dbReference>
<dbReference type="InterPro" id="IPR001128">
    <property type="entry name" value="Cyt_P450"/>
</dbReference>
<dbReference type="InterPro" id="IPR017972">
    <property type="entry name" value="Cyt_P450_CS"/>
</dbReference>
<dbReference type="InterPro" id="IPR002403">
    <property type="entry name" value="Cyt_P450_E_grp-IV"/>
</dbReference>
<dbReference type="InterPro" id="IPR036396">
    <property type="entry name" value="Cyt_P450_sf"/>
</dbReference>
<dbReference type="PANTHER" id="PTHR24304:SF2">
    <property type="entry name" value="24-HYDROXYCHOLESTEROL 7-ALPHA-HYDROXYLASE"/>
    <property type="match status" value="1"/>
</dbReference>
<dbReference type="PANTHER" id="PTHR24304">
    <property type="entry name" value="CYTOCHROME P450 FAMILY 7"/>
    <property type="match status" value="1"/>
</dbReference>
<dbReference type="Pfam" id="PF00067">
    <property type="entry name" value="p450"/>
    <property type="match status" value="1"/>
</dbReference>
<dbReference type="PRINTS" id="PR00465">
    <property type="entry name" value="EP450IV"/>
</dbReference>
<dbReference type="PRINTS" id="PR00385">
    <property type="entry name" value="P450"/>
</dbReference>
<dbReference type="SUPFAM" id="SSF48264">
    <property type="entry name" value="Cytochrome P450"/>
    <property type="match status" value="1"/>
</dbReference>
<dbReference type="PROSITE" id="PS00086">
    <property type="entry name" value="CYTOCHROME_P450"/>
    <property type="match status" value="1"/>
</dbReference>
<proteinExistence type="evidence at transcript level"/>
<reference key="1">
    <citation type="journal article" date="2005" name="Mol. Cell. Endocrinol.">
        <title>Pre-cholesterol precursors in gametogenesis.</title>
        <authorList>
            <person name="Rozman D."/>
            <person name="Seliskar M."/>
            <person name="Cotman M."/>
            <person name="Fink M."/>
        </authorList>
    </citation>
    <scope>NUCLEOTIDE SEQUENCE [MRNA]</scope>
    <source>
        <tissue>Testis</tissue>
    </source>
</reference>
<reference key="2">
    <citation type="journal article" date="2006" name="Biol. Pharm. Bull.">
        <title>cDNA cloning, genomic structure and expression analysis of the bovine lanosterol 14alpha-demethylase (CYP51) in gonads.</title>
        <authorList>
            <person name="Wang F."/>
            <person name="Shen Y."/>
            <person name="Song X."/>
            <person name="Xia G."/>
            <person name="Chen X."/>
            <person name="Zhou B."/>
            <person name="Lei L."/>
        </authorList>
    </citation>
    <scope>NUCLEOTIDE SEQUENCE [MRNA]</scope>
</reference>
<reference key="3">
    <citation type="submission" date="2007-07" db="EMBL/GenBank/DDBJ databases">
        <authorList>
            <consortium name="NIH - Mammalian Gene Collection (MGC) project"/>
        </authorList>
    </citation>
    <scope>NUCLEOTIDE SEQUENCE [LARGE SCALE MRNA]</scope>
    <source>
        <strain>Hereford</strain>
        <tissue>Fetal medulla</tissue>
    </source>
</reference>
<keyword id="KW-0152">Cholesterol biosynthesis</keyword>
<keyword id="KW-0153">Cholesterol metabolism</keyword>
<keyword id="KW-0256">Endoplasmic reticulum</keyword>
<keyword id="KW-0349">Heme</keyword>
<keyword id="KW-0408">Iron</keyword>
<keyword id="KW-0444">Lipid biosynthesis</keyword>
<keyword id="KW-0443">Lipid metabolism</keyword>
<keyword id="KW-0472">Membrane</keyword>
<keyword id="KW-0479">Metal-binding</keyword>
<keyword id="KW-0492">Microsome</keyword>
<keyword id="KW-0503">Monooxygenase</keyword>
<keyword id="KW-0560">Oxidoreductase</keyword>
<keyword id="KW-1185">Reference proteome</keyword>
<keyword id="KW-0752">Steroid biosynthesis</keyword>
<keyword id="KW-0753">Steroid metabolism</keyword>
<keyword id="KW-0756">Sterol biosynthesis</keyword>
<keyword id="KW-1207">Sterol metabolism</keyword>
<keyword id="KW-0812">Transmembrane</keyword>
<keyword id="KW-1133">Transmembrane helix</keyword>
<keyword id="KW-0832">Ubl conjugation</keyword>
<feature type="chain" id="PRO_0000051997" description="Lanosterol 14-alpha demethylase">
    <location>
        <begin position="1"/>
        <end position="502"/>
    </location>
</feature>
<feature type="transmembrane region" description="Helical" evidence="4">
    <location>
        <begin position="22"/>
        <end position="42"/>
    </location>
</feature>
<feature type="binding site" description="axial binding residue" evidence="1">
    <location>
        <position position="448"/>
    </location>
    <ligand>
        <name>heme</name>
        <dbReference type="ChEBI" id="CHEBI:30413"/>
    </ligand>
    <ligandPart>
        <name>Fe</name>
        <dbReference type="ChEBI" id="CHEBI:18248"/>
    </ligandPart>
</feature>
<name>CP51A_BOVIN</name>
<comment type="function">
    <text evidence="3">Sterol 14alpha-demethylase that plays a critical role in the cholesterol biosynthesis pathway, being cholesterol the major sterol component in mammalian membranes as well as a precursor for bile acid and steroid hormone synthesis. Cytochrome P450 monooxygenase that catalyzes the three-step oxidative removal of the 14alpha-methyl group (C-32) of sterols such as lanosterol (lanosta-8,24-dien-3beta-ol) and 24,25-dihydrolanosterol (DHL) in the form of formate, and converts the sterols to 4,4-dimethyl-5alpha-cholesta-8,14,24-trien-3beta-ol and 4,4-dimethyl-8,14-cholestadien-3beta-ol, respectively, which are intermediates of cholesterol biosynthesis. Can also demethylate substrates not intrinsic to mammals, such as eburicol (24-methylene-24,25-dihydrolanosterol), but at a lower rate than DHL.</text>
</comment>
<comment type="catalytic activity">
    <reaction evidence="3">
        <text>a 14alpha-methyl steroid + 3 reduced [NADPH--hemoprotein reductase] + 3 O2 = a Delta(14) steroid + formate + 3 oxidized [NADPH--hemoprotein reductase] + 4 H2O + 4 H(+)</text>
        <dbReference type="Rhea" id="RHEA:54028"/>
        <dbReference type="Rhea" id="RHEA-COMP:11964"/>
        <dbReference type="Rhea" id="RHEA-COMP:11965"/>
        <dbReference type="ChEBI" id="CHEBI:15377"/>
        <dbReference type="ChEBI" id="CHEBI:15378"/>
        <dbReference type="ChEBI" id="CHEBI:15379"/>
        <dbReference type="ChEBI" id="CHEBI:15740"/>
        <dbReference type="ChEBI" id="CHEBI:57618"/>
        <dbReference type="ChEBI" id="CHEBI:58210"/>
        <dbReference type="ChEBI" id="CHEBI:138029"/>
        <dbReference type="ChEBI" id="CHEBI:138031"/>
        <dbReference type="EC" id="1.14.14.154"/>
    </reaction>
    <physiologicalReaction direction="left-to-right" evidence="3">
        <dbReference type="Rhea" id="RHEA:54029"/>
    </physiologicalReaction>
</comment>
<comment type="catalytic activity">
    <reaction evidence="3">
        <text>lanosterol + 3 reduced [NADPH--hemoprotein reductase] + 3 O2 = 4,4-dimethyl-5alpha-cholesta-8,14,24-trien-3beta-ol + formate + 3 oxidized [NADPH--hemoprotein reductase] + 4 H2O + 4 H(+)</text>
        <dbReference type="Rhea" id="RHEA:25286"/>
        <dbReference type="Rhea" id="RHEA-COMP:11964"/>
        <dbReference type="Rhea" id="RHEA-COMP:11965"/>
        <dbReference type="ChEBI" id="CHEBI:15377"/>
        <dbReference type="ChEBI" id="CHEBI:15378"/>
        <dbReference type="ChEBI" id="CHEBI:15379"/>
        <dbReference type="ChEBI" id="CHEBI:15740"/>
        <dbReference type="ChEBI" id="CHEBI:16521"/>
        <dbReference type="ChEBI" id="CHEBI:17813"/>
        <dbReference type="ChEBI" id="CHEBI:57618"/>
        <dbReference type="ChEBI" id="CHEBI:58210"/>
        <dbReference type="EC" id="1.14.14.154"/>
    </reaction>
    <physiologicalReaction direction="left-to-right" evidence="3">
        <dbReference type="Rhea" id="RHEA:25287"/>
    </physiologicalReaction>
</comment>
<comment type="catalytic activity">
    <reaction evidence="3">
        <text>24,25-dihydrolanosterol + 3 reduced [NADPH--hemoprotein reductase] + 3 O2 = 4,4-dimethyl-8,14-cholestadien-3beta-ol + formate + 3 oxidized [NADPH--hemoprotein reductase] + 4 H2O + 4 H(+)</text>
        <dbReference type="Rhea" id="RHEA:45960"/>
        <dbReference type="Rhea" id="RHEA-COMP:11964"/>
        <dbReference type="Rhea" id="RHEA-COMP:11965"/>
        <dbReference type="ChEBI" id="CHEBI:15377"/>
        <dbReference type="ChEBI" id="CHEBI:15378"/>
        <dbReference type="ChEBI" id="CHEBI:15379"/>
        <dbReference type="ChEBI" id="CHEBI:15740"/>
        <dbReference type="ChEBI" id="CHEBI:28113"/>
        <dbReference type="ChEBI" id="CHEBI:57618"/>
        <dbReference type="ChEBI" id="CHEBI:58210"/>
        <dbReference type="ChEBI" id="CHEBI:78904"/>
    </reaction>
    <physiologicalReaction direction="left-to-right" evidence="3">
        <dbReference type="Rhea" id="RHEA:45961"/>
    </physiologicalReaction>
</comment>
<comment type="catalytic activity">
    <reaction evidence="3">
        <text>a 14alpha-methyl steroid + reduced [NADPH--hemoprotein reductase] + O2 = a 14alpha-hydroxymethyl steroid + oxidized [NADPH--hemoprotein reductase] + H2O + H(+)</text>
        <dbReference type="Rhea" id="RHEA:68060"/>
        <dbReference type="Rhea" id="RHEA-COMP:11964"/>
        <dbReference type="Rhea" id="RHEA-COMP:11965"/>
        <dbReference type="ChEBI" id="CHEBI:15377"/>
        <dbReference type="ChEBI" id="CHEBI:15378"/>
        <dbReference type="ChEBI" id="CHEBI:15379"/>
        <dbReference type="ChEBI" id="CHEBI:57618"/>
        <dbReference type="ChEBI" id="CHEBI:58210"/>
        <dbReference type="ChEBI" id="CHEBI:138029"/>
        <dbReference type="ChEBI" id="CHEBI:176901"/>
    </reaction>
    <physiologicalReaction direction="left-to-right" evidence="3">
        <dbReference type="Rhea" id="RHEA:68061"/>
    </physiologicalReaction>
</comment>
<comment type="catalytic activity">
    <reaction evidence="3">
        <text>a 14alpha-hydroxymethyl steroid + reduced [NADPH--hemoprotein reductase] + O2 = a 14alpha-formyl steroid + oxidized [NADPH--hemoprotein reductase] + 2 H2O + H(+)</text>
        <dbReference type="Rhea" id="RHEA:68064"/>
        <dbReference type="Rhea" id="RHEA-COMP:11964"/>
        <dbReference type="Rhea" id="RHEA-COMP:11965"/>
        <dbReference type="ChEBI" id="CHEBI:15377"/>
        <dbReference type="ChEBI" id="CHEBI:15378"/>
        <dbReference type="ChEBI" id="CHEBI:15379"/>
        <dbReference type="ChEBI" id="CHEBI:57618"/>
        <dbReference type="ChEBI" id="CHEBI:58210"/>
        <dbReference type="ChEBI" id="CHEBI:176901"/>
        <dbReference type="ChEBI" id="CHEBI:176902"/>
    </reaction>
    <physiologicalReaction direction="left-to-right" evidence="3">
        <dbReference type="Rhea" id="RHEA:68065"/>
    </physiologicalReaction>
</comment>
<comment type="catalytic activity">
    <reaction evidence="3">
        <text>a 14alpha-formyl steroid + reduced [NADPH--hemoprotein reductase] + O2 = a Delta(14) steroid + formate + oxidized [NADPH--hemoprotein reductase] + H2O + 2 H(+)</text>
        <dbReference type="Rhea" id="RHEA:68068"/>
        <dbReference type="Rhea" id="RHEA-COMP:11964"/>
        <dbReference type="Rhea" id="RHEA-COMP:11965"/>
        <dbReference type="ChEBI" id="CHEBI:15377"/>
        <dbReference type="ChEBI" id="CHEBI:15378"/>
        <dbReference type="ChEBI" id="CHEBI:15379"/>
        <dbReference type="ChEBI" id="CHEBI:15740"/>
        <dbReference type="ChEBI" id="CHEBI:57618"/>
        <dbReference type="ChEBI" id="CHEBI:58210"/>
        <dbReference type="ChEBI" id="CHEBI:138031"/>
        <dbReference type="ChEBI" id="CHEBI:176902"/>
    </reaction>
    <physiologicalReaction direction="left-to-right" evidence="3">
        <dbReference type="Rhea" id="RHEA:68069"/>
    </physiologicalReaction>
</comment>
<comment type="catalytic activity">
    <reaction evidence="3">
        <text>lanosterol + reduced [NADPH--hemoprotein reductase] + O2 = 32-hydroxylanosterol + oxidized [NADPH--hemoprotein reductase] + H2O + H(+)</text>
        <dbReference type="Rhea" id="RHEA:75103"/>
        <dbReference type="Rhea" id="RHEA-COMP:11964"/>
        <dbReference type="Rhea" id="RHEA-COMP:11965"/>
        <dbReference type="ChEBI" id="CHEBI:15377"/>
        <dbReference type="ChEBI" id="CHEBI:15378"/>
        <dbReference type="ChEBI" id="CHEBI:15379"/>
        <dbReference type="ChEBI" id="CHEBI:16521"/>
        <dbReference type="ChEBI" id="CHEBI:57618"/>
        <dbReference type="ChEBI" id="CHEBI:58210"/>
        <dbReference type="ChEBI" id="CHEBI:166806"/>
    </reaction>
    <physiologicalReaction direction="left-to-right" evidence="3">
        <dbReference type="Rhea" id="RHEA:75104"/>
    </physiologicalReaction>
</comment>
<comment type="catalytic activity">
    <reaction evidence="3">
        <text>32-hydroxylanosterol + reduced [NADPH--hemoprotein reductase] + O2 = 32-oxolanosterol + oxidized [NADPH--hemoprotein reductase] + 2 H2O + H(+)</text>
        <dbReference type="Rhea" id="RHEA:75107"/>
        <dbReference type="Rhea" id="RHEA-COMP:11964"/>
        <dbReference type="Rhea" id="RHEA-COMP:11965"/>
        <dbReference type="ChEBI" id="CHEBI:15377"/>
        <dbReference type="ChEBI" id="CHEBI:15378"/>
        <dbReference type="ChEBI" id="CHEBI:15379"/>
        <dbReference type="ChEBI" id="CHEBI:57618"/>
        <dbReference type="ChEBI" id="CHEBI:58210"/>
        <dbReference type="ChEBI" id="CHEBI:166681"/>
        <dbReference type="ChEBI" id="CHEBI:166806"/>
    </reaction>
    <physiologicalReaction direction="left-to-right" evidence="3">
        <dbReference type="Rhea" id="RHEA:75108"/>
    </physiologicalReaction>
</comment>
<comment type="catalytic activity">
    <reaction evidence="3">
        <text>32-oxolanosterol + reduced [NADPH--hemoprotein reductase] + O2 = 4,4-dimethyl-5alpha-cholesta-8,14,24-trien-3beta-ol + formate + oxidized [NADPH--hemoprotein reductase] + H2O + 2 H(+)</text>
        <dbReference type="Rhea" id="RHEA:75111"/>
        <dbReference type="Rhea" id="RHEA-COMP:11964"/>
        <dbReference type="Rhea" id="RHEA-COMP:11965"/>
        <dbReference type="ChEBI" id="CHEBI:15377"/>
        <dbReference type="ChEBI" id="CHEBI:15378"/>
        <dbReference type="ChEBI" id="CHEBI:15379"/>
        <dbReference type="ChEBI" id="CHEBI:15740"/>
        <dbReference type="ChEBI" id="CHEBI:17813"/>
        <dbReference type="ChEBI" id="CHEBI:57618"/>
        <dbReference type="ChEBI" id="CHEBI:58210"/>
        <dbReference type="ChEBI" id="CHEBI:166681"/>
    </reaction>
    <physiologicalReaction direction="left-to-right" evidence="3">
        <dbReference type="Rhea" id="RHEA:75112"/>
    </physiologicalReaction>
</comment>
<comment type="catalytic activity">
    <reaction evidence="3">
        <text>24,25-dihydrolanosterol + reduced [NADPH--hemoprotein reductase] + O2 = 32-hydroxy-24,25-dihydrolanosterol + oxidized [NADPH--hemoprotein reductase] + H2O + H(+)</text>
        <dbReference type="Rhea" id="RHEA:75079"/>
        <dbReference type="Rhea" id="RHEA-COMP:11964"/>
        <dbReference type="Rhea" id="RHEA-COMP:11965"/>
        <dbReference type="ChEBI" id="CHEBI:15377"/>
        <dbReference type="ChEBI" id="CHEBI:15378"/>
        <dbReference type="ChEBI" id="CHEBI:15379"/>
        <dbReference type="ChEBI" id="CHEBI:28113"/>
        <dbReference type="ChEBI" id="CHEBI:57618"/>
        <dbReference type="ChEBI" id="CHEBI:58210"/>
        <dbReference type="ChEBI" id="CHEBI:87057"/>
    </reaction>
    <physiologicalReaction direction="left-to-right" evidence="3">
        <dbReference type="Rhea" id="RHEA:75080"/>
    </physiologicalReaction>
</comment>
<comment type="catalytic activity">
    <reaction evidence="3">
        <text>32-hydroxy-24,25-dihydrolanosterol + reduced [NADPH--hemoprotein reductase] + O2 = 32-oxo-24,25-dihydrolanosterol + oxidized [NADPH--hemoprotein reductase] + 2 H2O + H(+)</text>
        <dbReference type="Rhea" id="RHEA:75087"/>
        <dbReference type="Rhea" id="RHEA-COMP:11964"/>
        <dbReference type="Rhea" id="RHEA-COMP:11965"/>
        <dbReference type="ChEBI" id="CHEBI:15377"/>
        <dbReference type="ChEBI" id="CHEBI:15378"/>
        <dbReference type="ChEBI" id="CHEBI:15379"/>
        <dbReference type="ChEBI" id="CHEBI:57618"/>
        <dbReference type="ChEBI" id="CHEBI:58210"/>
        <dbReference type="ChEBI" id="CHEBI:87057"/>
        <dbReference type="ChEBI" id="CHEBI:87060"/>
    </reaction>
    <physiologicalReaction direction="left-to-right" evidence="3">
        <dbReference type="Rhea" id="RHEA:75088"/>
    </physiologicalReaction>
</comment>
<comment type="catalytic activity">
    <reaction evidence="3">
        <text>32-oxo-24,25-dihydrolanosterol + reduced [NADPH--hemoprotein reductase] + O2 = 4,4-dimethyl-8,14-cholestadien-3beta-ol + formate + oxidized [NADPH--hemoprotein reductase] + H2O + 2 H(+)</text>
        <dbReference type="Rhea" id="RHEA:75083"/>
        <dbReference type="Rhea" id="RHEA-COMP:11964"/>
        <dbReference type="Rhea" id="RHEA-COMP:11965"/>
        <dbReference type="ChEBI" id="CHEBI:15377"/>
        <dbReference type="ChEBI" id="CHEBI:15378"/>
        <dbReference type="ChEBI" id="CHEBI:15379"/>
        <dbReference type="ChEBI" id="CHEBI:15740"/>
        <dbReference type="ChEBI" id="CHEBI:57618"/>
        <dbReference type="ChEBI" id="CHEBI:58210"/>
        <dbReference type="ChEBI" id="CHEBI:78904"/>
        <dbReference type="ChEBI" id="CHEBI:87060"/>
    </reaction>
    <physiologicalReaction direction="left-to-right" evidence="3">
        <dbReference type="Rhea" id="RHEA:75084"/>
    </physiologicalReaction>
</comment>
<comment type="cofactor">
    <cofactor evidence="2">
        <name>heme</name>
        <dbReference type="ChEBI" id="CHEBI:30413"/>
    </cofactor>
</comment>
<comment type="activity regulation">
    <text evidence="3">Inhibited by azalanstat. Inhibited by azole antifungal agents ketoconazole, itraconazole and fluconazole.</text>
</comment>
<comment type="pathway">
    <text evidence="3">Steroid biosynthesis; zymosterol biosynthesis; zymosterol from lanosterol: step 1/6.</text>
</comment>
<comment type="subcellular location">
    <subcellularLocation>
        <location evidence="3">Endoplasmic reticulum membrane</location>
        <topology evidence="4">Single-pass membrane protein</topology>
    </subcellularLocation>
    <subcellularLocation>
        <location evidence="3">Microsome membrane</location>
        <topology evidence="4">Single-pass membrane protein</topology>
    </subcellularLocation>
</comment>
<comment type="PTM">
    <text evidence="2">Ubiquitinated by MARCHF6, leading to proteasomal degradation.</text>
</comment>
<comment type="similarity">
    <text evidence="5">Belongs to the cytochrome P450 family.</text>
</comment>
<protein>
    <recommendedName>
        <fullName evidence="2">Lanosterol 14-alpha demethylase</fullName>
        <shortName>LDM</shortName>
        <ecNumber evidence="2 3">1.14.14.154</ecNumber>
    </recommendedName>
    <alternativeName>
        <fullName>CYPLI</fullName>
    </alternativeName>
    <alternativeName>
        <fullName>Cytochrome P450 51A1</fullName>
        <shortName evidence="3">CYP51</shortName>
    </alternativeName>
    <alternativeName>
        <fullName>Cytochrome P450-14DM</fullName>
        <shortName>Cytochrome P45014DM</shortName>
    </alternativeName>
    <alternativeName>
        <fullName>Cytochrome P450LI</fullName>
    </alternativeName>
    <alternativeName>
        <fullName>Sterol 14-alpha demethylase</fullName>
    </alternativeName>
</protein>
<accession>Q4PJW3</accession>
<accession>A6QPJ2</accession>
<accession>Q3YM99</accession>
<evidence type="ECO:0000250" key="1"/>
<evidence type="ECO:0000250" key="2">
    <source>
        <dbReference type="UniProtKB" id="Q16850"/>
    </source>
</evidence>
<evidence type="ECO:0000250" key="3">
    <source>
        <dbReference type="UniProtKB" id="Q64654"/>
    </source>
</evidence>
<evidence type="ECO:0000255" key="4"/>
<evidence type="ECO:0000305" key="5"/>
<sequence>MLDLLQAGGSVLGQAMEQVTGGNLASMLLIACAFTLSLVYLFRLAVGHLAPPLPTGAKSPPYIVSPIPFLGHAIAFGKSPIEFLEDAYEKYGPVFSFTMVGKTFTYLLGSEAAALLFNSKNEDLNAEEVYSRLTTPVFGKGVAYDVPNTVFLEQKKMLKSGLNIAHFRQHVSIIEKETKEYFKSWGESGEKNLFEALSELIILTASHCLHGKEIRSQLNEKVAQLYADLDGGFSHAAWLLPGWLPLPSFRRRDRAHREIKNIFYKAIQKRRESGEKIDDILQTLLESTYKDGRPLTDDEVAGMLIGLLLAGQHTSSTTSAWMGFFLARDKTLQEKCFLEQKTVCGENLPPLTYDQLKDLNLLDRCIKETLRLRPPIMTMMRLAKTPLTVAGYTIPPGHQVCVSPTVNQRLKDSWVERLDFNPDRYLEDSPASGEKFAYVPFGAGRHRCIGENFAYVQIKTIWSTMLRLYEFDLIDGYFPTVNYTTMIHTPEKPIIRYKRRSK</sequence>
<gene>
    <name evidence="2" type="primary">CYP51A1</name>
</gene>
<organism>
    <name type="scientific">Bos taurus</name>
    <name type="common">Bovine</name>
    <dbReference type="NCBI Taxonomy" id="9913"/>
    <lineage>
        <taxon>Eukaryota</taxon>
        <taxon>Metazoa</taxon>
        <taxon>Chordata</taxon>
        <taxon>Craniata</taxon>
        <taxon>Vertebrata</taxon>
        <taxon>Euteleostomi</taxon>
        <taxon>Mammalia</taxon>
        <taxon>Eutheria</taxon>
        <taxon>Laurasiatheria</taxon>
        <taxon>Artiodactyla</taxon>
        <taxon>Ruminantia</taxon>
        <taxon>Pecora</taxon>
        <taxon>Bovidae</taxon>
        <taxon>Bovinae</taxon>
        <taxon>Bos</taxon>
    </lineage>
</organism>